<evidence type="ECO:0000250" key="1"/>
<evidence type="ECO:0000255" key="2"/>
<evidence type="ECO:0000269" key="3">
    <source>
    </source>
</evidence>
<evidence type="ECO:0000305" key="4"/>
<name>O16B_CONVX</name>
<feature type="signal peptide" evidence="2">
    <location>
        <begin position="1"/>
        <end position="22"/>
    </location>
</feature>
<feature type="propeptide" id="PRO_0000234825" evidence="3">
    <location>
        <begin position="23"/>
        <end position="52"/>
    </location>
</feature>
<feature type="peptide" id="PRO_0000234826" description="Conotoxin VxVIB">
    <location>
        <begin position="53"/>
        <end position="88"/>
    </location>
</feature>
<feature type="disulfide bond" evidence="1">
    <location>
        <begin position="53"/>
        <end position="68"/>
    </location>
</feature>
<feature type="disulfide bond" evidence="1">
    <location>
        <begin position="60"/>
        <end position="72"/>
    </location>
</feature>
<feature type="disulfide bond" evidence="1">
    <location>
        <begin position="67"/>
        <end position="81"/>
    </location>
</feature>
<proteinExistence type="evidence at protein level"/>
<dbReference type="EMBL" id="AY151285">
    <property type="protein sequence ID" value="AAN71750.1"/>
    <property type="molecule type" value="mRNA"/>
</dbReference>
<dbReference type="SMR" id="Q8IS41"/>
<dbReference type="ConoServer" id="821">
    <property type="toxin name" value="VxVIB precursor"/>
</dbReference>
<dbReference type="GO" id="GO:0005576">
    <property type="term" value="C:extracellular region"/>
    <property type="evidence" value="ECO:0007669"/>
    <property type="project" value="UniProtKB-SubCell"/>
</dbReference>
<dbReference type="GO" id="GO:0008200">
    <property type="term" value="F:ion channel inhibitor activity"/>
    <property type="evidence" value="ECO:0007669"/>
    <property type="project" value="InterPro"/>
</dbReference>
<dbReference type="GO" id="GO:0090729">
    <property type="term" value="F:toxin activity"/>
    <property type="evidence" value="ECO:0007669"/>
    <property type="project" value="UniProtKB-KW"/>
</dbReference>
<dbReference type="InterPro" id="IPR004214">
    <property type="entry name" value="Conotoxin"/>
</dbReference>
<dbReference type="Pfam" id="PF02950">
    <property type="entry name" value="Conotoxin"/>
    <property type="match status" value="1"/>
</dbReference>
<sequence>MNLACVLIVAVLFLTASQLATAASYARDKQEYPAVRSSDEMQDSEDLTLTKECTDDSQFCDPNDHDCCSGECIDEGGRGVCAIVPEHV</sequence>
<reference key="1">
    <citation type="journal article" date="2006" name="Toxicon">
        <title>Two novel O-superfamily conotoxins from Conus vexillum.</title>
        <authorList>
            <person name="Jiang H."/>
            <person name="Xu C.-Q."/>
            <person name="Wang C.-Z."/>
            <person name="Fan C.-X."/>
            <person name="Zhao T.-Y."/>
            <person name="Chen J.-S."/>
            <person name="Chi C.-W."/>
        </authorList>
    </citation>
    <scope>NUCLEOTIDE SEQUENCE [MRNA]</scope>
    <scope>PROTEIN SEQUENCE OF 53-88</scope>
    <scope>FUNCTION</scope>
    <scope>MASS SPECTROMETRY</scope>
    <source>
        <tissue>Venom</tissue>
        <tissue>Venom duct</tissue>
    </source>
</reference>
<accession>Q8IS41</accession>
<protein>
    <recommendedName>
        <fullName>Conotoxin VxVIB</fullName>
    </recommendedName>
    <alternativeName>
        <fullName>Conotoxin vx6b</fullName>
    </alternativeName>
</protein>
<keyword id="KW-0903">Direct protein sequencing</keyword>
<keyword id="KW-1015">Disulfide bond</keyword>
<keyword id="KW-0960">Knottin</keyword>
<keyword id="KW-0528">Neurotoxin</keyword>
<keyword id="KW-0964">Secreted</keyword>
<keyword id="KW-0732">Signal</keyword>
<keyword id="KW-0800">Toxin</keyword>
<organism>
    <name type="scientific">Conus vexillum</name>
    <name type="common">Flag cone</name>
    <dbReference type="NCBI Taxonomy" id="89431"/>
    <lineage>
        <taxon>Eukaryota</taxon>
        <taxon>Metazoa</taxon>
        <taxon>Spiralia</taxon>
        <taxon>Lophotrochozoa</taxon>
        <taxon>Mollusca</taxon>
        <taxon>Gastropoda</taxon>
        <taxon>Caenogastropoda</taxon>
        <taxon>Neogastropoda</taxon>
        <taxon>Conoidea</taxon>
        <taxon>Conidae</taxon>
        <taxon>Conus</taxon>
        <taxon>Rhizoconus</taxon>
    </lineage>
</organism>
<comment type="function">
    <text evidence="3">May act as a neurotoxin, but produces no obvious effect on ionic currents when tested on the mouse dorsal rooted ganglia (DRG).</text>
</comment>
<comment type="subcellular location">
    <subcellularLocation>
        <location>Secreted</location>
    </subcellularLocation>
</comment>
<comment type="tissue specificity">
    <text>Expressed by the venom duct.</text>
</comment>
<comment type="domain">
    <text evidence="1">The presence of a 'disulfide through disulfide knot' structurally defines this protein as a knottin.</text>
</comment>
<comment type="domain">
    <text>The cysteine framework is VI/VII (C-C-CC-C-C).</text>
</comment>
<comment type="mass spectrometry"/>
<comment type="similarity">
    <text evidence="4">Belongs to the conotoxin O1 superfamily.</text>
</comment>